<dbReference type="EMBL" id="AL596167">
    <property type="protein sequence ID" value="CAC96428.1"/>
    <property type="molecule type" value="Genomic_DNA"/>
</dbReference>
<dbReference type="PIR" id="AD1582">
    <property type="entry name" value="AD1582"/>
</dbReference>
<dbReference type="RefSeq" id="WP_003771538.1">
    <property type="nucleotide sequence ID" value="NC_003212.1"/>
</dbReference>
<dbReference type="SMR" id="Q92CH5"/>
<dbReference type="STRING" id="272626.gene:17565527"/>
<dbReference type="KEGG" id="lin:uvrC"/>
<dbReference type="eggNOG" id="COG0322">
    <property type="taxonomic scope" value="Bacteria"/>
</dbReference>
<dbReference type="HOGENOM" id="CLU_014841_3_2_9"/>
<dbReference type="OrthoDB" id="9804933at2"/>
<dbReference type="Proteomes" id="UP000002513">
    <property type="component" value="Chromosome"/>
</dbReference>
<dbReference type="GO" id="GO:0005737">
    <property type="term" value="C:cytoplasm"/>
    <property type="evidence" value="ECO:0007669"/>
    <property type="project" value="UniProtKB-SubCell"/>
</dbReference>
<dbReference type="GO" id="GO:0009380">
    <property type="term" value="C:excinuclease repair complex"/>
    <property type="evidence" value="ECO:0007669"/>
    <property type="project" value="InterPro"/>
</dbReference>
<dbReference type="GO" id="GO:0003677">
    <property type="term" value="F:DNA binding"/>
    <property type="evidence" value="ECO:0007669"/>
    <property type="project" value="UniProtKB-UniRule"/>
</dbReference>
<dbReference type="GO" id="GO:0009381">
    <property type="term" value="F:excinuclease ABC activity"/>
    <property type="evidence" value="ECO:0007669"/>
    <property type="project" value="UniProtKB-UniRule"/>
</dbReference>
<dbReference type="GO" id="GO:0006289">
    <property type="term" value="P:nucleotide-excision repair"/>
    <property type="evidence" value="ECO:0007669"/>
    <property type="project" value="UniProtKB-UniRule"/>
</dbReference>
<dbReference type="GO" id="GO:0009432">
    <property type="term" value="P:SOS response"/>
    <property type="evidence" value="ECO:0007669"/>
    <property type="project" value="UniProtKB-UniRule"/>
</dbReference>
<dbReference type="CDD" id="cd10434">
    <property type="entry name" value="GIY-YIG_UvrC_Cho"/>
    <property type="match status" value="1"/>
</dbReference>
<dbReference type="FunFam" id="1.10.150.20:FF:000005">
    <property type="entry name" value="UvrABC system protein C"/>
    <property type="match status" value="1"/>
</dbReference>
<dbReference type="FunFam" id="3.30.420.340:FF:000002">
    <property type="entry name" value="UvrABC system protein C"/>
    <property type="match status" value="1"/>
</dbReference>
<dbReference type="FunFam" id="3.40.1440.10:FF:000001">
    <property type="entry name" value="UvrABC system protein C"/>
    <property type="match status" value="1"/>
</dbReference>
<dbReference type="FunFam" id="4.10.860.10:FF:000002">
    <property type="entry name" value="UvrABC system protein C"/>
    <property type="match status" value="1"/>
</dbReference>
<dbReference type="Gene3D" id="1.10.150.20">
    <property type="entry name" value="5' to 3' exonuclease, C-terminal subdomain"/>
    <property type="match status" value="1"/>
</dbReference>
<dbReference type="Gene3D" id="3.40.1440.10">
    <property type="entry name" value="GIY-YIG endonuclease"/>
    <property type="match status" value="1"/>
</dbReference>
<dbReference type="Gene3D" id="4.10.860.10">
    <property type="entry name" value="UVR domain"/>
    <property type="match status" value="1"/>
</dbReference>
<dbReference type="Gene3D" id="3.30.420.340">
    <property type="entry name" value="UvrC, RNAse H endonuclease domain"/>
    <property type="match status" value="1"/>
</dbReference>
<dbReference type="HAMAP" id="MF_00203">
    <property type="entry name" value="UvrC"/>
    <property type="match status" value="1"/>
</dbReference>
<dbReference type="InterPro" id="IPR041663">
    <property type="entry name" value="DisA/LigA_HHH"/>
</dbReference>
<dbReference type="InterPro" id="IPR000305">
    <property type="entry name" value="GIY-YIG_endonuc"/>
</dbReference>
<dbReference type="InterPro" id="IPR035901">
    <property type="entry name" value="GIY-YIG_endonuc_sf"/>
</dbReference>
<dbReference type="InterPro" id="IPR047296">
    <property type="entry name" value="GIY-YIG_UvrC_Cho"/>
</dbReference>
<dbReference type="InterPro" id="IPR010994">
    <property type="entry name" value="RuvA_2-like"/>
</dbReference>
<dbReference type="InterPro" id="IPR001943">
    <property type="entry name" value="UVR_dom"/>
</dbReference>
<dbReference type="InterPro" id="IPR036876">
    <property type="entry name" value="UVR_dom_sf"/>
</dbReference>
<dbReference type="InterPro" id="IPR050066">
    <property type="entry name" value="UvrABC_protein_C"/>
</dbReference>
<dbReference type="InterPro" id="IPR004791">
    <property type="entry name" value="UvrC"/>
</dbReference>
<dbReference type="InterPro" id="IPR001162">
    <property type="entry name" value="UvrC_RNase_H_dom"/>
</dbReference>
<dbReference type="InterPro" id="IPR038476">
    <property type="entry name" value="UvrC_RNase_H_dom_sf"/>
</dbReference>
<dbReference type="NCBIfam" id="TIGR00194">
    <property type="entry name" value="uvrC"/>
    <property type="match status" value="1"/>
</dbReference>
<dbReference type="PANTHER" id="PTHR30562:SF1">
    <property type="entry name" value="UVRABC SYSTEM PROTEIN C"/>
    <property type="match status" value="1"/>
</dbReference>
<dbReference type="PANTHER" id="PTHR30562">
    <property type="entry name" value="UVRC/OXIDOREDUCTASE"/>
    <property type="match status" value="1"/>
</dbReference>
<dbReference type="Pfam" id="PF01541">
    <property type="entry name" value="GIY-YIG"/>
    <property type="match status" value="1"/>
</dbReference>
<dbReference type="Pfam" id="PF12826">
    <property type="entry name" value="HHH_2"/>
    <property type="match status" value="1"/>
</dbReference>
<dbReference type="Pfam" id="PF02151">
    <property type="entry name" value="UVR"/>
    <property type="match status" value="1"/>
</dbReference>
<dbReference type="Pfam" id="PF22920">
    <property type="entry name" value="UvrC_RNaseH"/>
    <property type="match status" value="1"/>
</dbReference>
<dbReference type="Pfam" id="PF08459">
    <property type="entry name" value="UvrC_RNaseH_dom"/>
    <property type="match status" value="1"/>
</dbReference>
<dbReference type="SMART" id="SM00465">
    <property type="entry name" value="GIYc"/>
    <property type="match status" value="1"/>
</dbReference>
<dbReference type="SUPFAM" id="SSF46600">
    <property type="entry name" value="C-terminal UvrC-binding domain of UvrB"/>
    <property type="match status" value="1"/>
</dbReference>
<dbReference type="SUPFAM" id="SSF82771">
    <property type="entry name" value="GIY-YIG endonuclease"/>
    <property type="match status" value="1"/>
</dbReference>
<dbReference type="SUPFAM" id="SSF47781">
    <property type="entry name" value="RuvA domain 2-like"/>
    <property type="match status" value="1"/>
</dbReference>
<dbReference type="PROSITE" id="PS50164">
    <property type="entry name" value="GIY_YIG"/>
    <property type="match status" value="1"/>
</dbReference>
<dbReference type="PROSITE" id="PS50151">
    <property type="entry name" value="UVR"/>
    <property type="match status" value="1"/>
</dbReference>
<dbReference type="PROSITE" id="PS50165">
    <property type="entry name" value="UVRC"/>
    <property type="match status" value="1"/>
</dbReference>
<reference key="1">
    <citation type="journal article" date="2001" name="Science">
        <title>Comparative genomics of Listeria species.</title>
        <authorList>
            <person name="Glaser P."/>
            <person name="Frangeul L."/>
            <person name="Buchrieser C."/>
            <person name="Rusniok C."/>
            <person name="Amend A."/>
            <person name="Baquero F."/>
            <person name="Berche P."/>
            <person name="Bloecker H."/>
            <person name="Brandt P."/>
            <person name="Chakraborty T."/>
            <person name="Charbit A."/>
            <person name="Chetouani F."/>
            <person name="Couve E."/>
            <person name="de Daruvar A."/>
            <person name="Dehoux P."/>
            <person name="Domann E."/>
            <person name="Dominguez-Bernal G."/>
            <person name="Duchaud E."/>
            <person name="Durant L."/>
            <person name="Dussurget O."/>
            <person name="Entian K.-D."/>
            <person name="Fsihi H."/>
            <person name="Garcia-del Portillo F."/>
            <person name="Garrido P."/>
            <person name="Gautier L."/>
            <person name="Goebel W."/>
            <person name="Gomez-Lopez N."/>
            <person name="Hain T."/>
            <person name="Hauf J."/>
            <person name="Jackson D."/>
            <person name="Jones L.-M."/>
            <person name="Kaerst U."/>
            <person name="Kreft J."/>
            <person name="Kuhn M."/>
            <person name="Kunst F."/>
            <person name="Kurapkat G."/>
            <person name="Madueno E."/>
            <person name="Maitournam A."/>
            <person name="Mata Vicente J."/>
            <person name="Ng E."/>
            <person name="Nedjari H."/>
            <person name="Nordsiek G."/>
            <person name="Novella S."/>
            <person name="de Pablos B."/>
            <person name="Perez-Diaz J.-C."/>
            <person name="Purcell R."/>
            <person name="Remmel B."/>
            <person name="Rose M."/>
            <person name="Schlueter T."/>
            <person name="Simoes N."/>
            <person name="Tierrez A."/>
            <person name="Vazquez-Boland J.-A."/>
            <person name="Voss H."/>
            <person name="Wehland J."/>
            <person name="Cossart P."/>
        </authorList>
    </citation>
    <scope>NUCLEOTIDE SEQUENCE [LARGE SCALE GENOMIC DNA]</scope>
    <source>
        <strain>ATCC BAA-680 / CLIP 11262</strain>
    </source>
</reference>
<protein>
    <recommendedName>
        <fullName evidence="1">UvrABC system protein C</fullName>
        <shortName evidence="1">Protein UvrC</shortName>
    </recommendedName>
    <alternativeName>
        <fullName evidence="1">Excinuclease ABC subunit C</fullName>
    </alternativeName>
</protein>
<gene>
    <name evidence="1" type="primary">uvrC</name>
    <name type="ordered locus">lin1197</name>
</gene>
<sequence>MSSEHIQNKLALLPDQPGCYLMKDRQGTIIYVGKAKVLKNRVRSYFSGTHDSKTQRLVQEIVDFEYIVTSSNVEALLLEINLIKKHDPRFNIRLKDDKTYPFIKITNERHPRLIITRQVKKDKGKYFGPYPNVYAANEVKRILDRLYPLRKCSTLPNKVCLYYHLGQCLAPCVFDVEASKYKEMQDEIVAFLNGGYKTVKNDLMKKMQEAAENMEFEKAGEFRDQINAIETTMEKQKMTMNDFVDRDVFGYAIDKGWMCVQVFFIRQGKLIERDVSQFPFYNDADEDFLTFIGQFYQKANHIPPKEIYLPDDVDSEAVQAVVPDTKIIVPQRGNKKELVKLAYKNAKIALNEKFMLLERNEERTVGAVERLGEAMGIPTPSRVEAFDNSNIHGTDPVSAMVTFLDGKPSKNDYRKYKIKTVEGPDDYATMREVIRRRYWRVLKEGLPMPDLILIDGGKGQIDSAKDVLTNELGLDIPVAGLAKDDKHRTSQLLFGDPLEIVPLERNSQEFYLLQRMQDEVHRFAITFHRQLRSKTGFQSILDGIPGVGPGRKKKLLKHFGSMKKLKEASVEEIKEAGVPLNVAEEVHKHITAFNEKAKNTEQK</sequence>
<organism>
    <name type="scientific">Listeria innocua serovar 6a (strain ATCC BAA-680 / CLIP 11262)</name>
    <dbReference type="NCBI Taxonomy" id="272626"/>
    <lineage>
        <taxon>Bacteria</taxon>
        <taxon>Bacillati</taxon>
        <taxon>Bacillota</taxon>
        <taxon>Bacilli</taxon>
        <taxon>Bacillales</taxon>
        <taxon>Listeriaceae</taxon>
        <taxon>Listeria</taxon>
    </lineage>
</organism>
<feature type="chain" id="PRO_0000138312" description="UvrABC system protein C">
    <location>
        <begin position="1"/>
        <end position="603"/>
    </location>
</feature>
<feature type="domain" description="GIY-YIG" evidence="1">
    <location>
        <begin position="15"/>
        <end position="92"/>
    </location>
</feature>
<feature type="domain" description="UVR" evidence="1">
    <location>
        <begin position="197"/>
        <end position="232"/>
    </location>
</feature>
<keyword id="KW-0963">Cytoplasm</keyword>
<keyword id="KW-0227">DNA damage</keyword>
<keyword id="KW-0228">DNA excision</keyword>
<keyword id="KW-0234">DNA repair</keyword>
<keyword id="KW-0267">Excision nuclease</keyword>
<keyword id="KW-0742">SOS response</keyword>
<proteinExistence type="inferred from homology"/>
<accession>Q92CH5</accession>
<comment type="function">
    <text evidence="1">The UvrABC repair system catalyzes the recognition and processing of DNA lesions. UvrC both incises the 5' and 3' sides of the lesion. The N-terminal half is responsible for the 3' incision and the C-terminal half is responsible for the 5' incision.</text>
</comment>
<comment type="subunit">
    <text evidence="1">Interacts with UvrB in an incision complex.</text>
</comment>
<comment type="subcellular location">
    <subcellularLocation>
        <location evidence="1">Cytoplasm</location>
    </subcellularLocation>
</comment>
<comment type="similarity">
    <text evidence="1">Belongs to the UvrC family.</text>
</comment>
<name>UVRC_LISIN</name>
<evidence type="ECO:0000255" key="1">
    <source>
        <dbReference type="HAMAP-Rule" id="MF_00203"/>
    </source>
</evidence>